<evidence type="ECO:0000255" key="1">
    <source>
        <dbReference type="HAMAP-Rule" id="MF_00675"/>
    </source>
</evidence>
<accession>B9MS46</accession>
<sequence>MKRFMDEDFLLNNKTAKVLYEKYAKDMPIVDFHCHLNPKEIYENKTFKNITEVWLGGDHYKWRLMRTNGIEEKYITGDADDYEKFLAWAKTIPMAIGNPIYHWTHLELKRYFGIDDVLNERSAPIIWEKTNKVLKELGARDIILKSNVEIICTTDDPIDTLEYHLKLKEDKDFNVKVYPTFRPDKGVNIERETFIPWVKKLAEVYGKKIESYDEFLDALKSRAEFFHSVGCRASDHAIDDMVFADASFDEVANIFKKALAGEKLTEIEFAKYKTYTLRFLGKVYSSLGWAMQLHINALRNNNTRMFNILGPDTGYDSINDGHIAFALVKFLDSLEKENSLPKTILYSLNPKDNYVLATIMGSFQGGGIPGKMQLGAAWWFNDSKDGNIQQMKDLANLGLLSRFVGMVTDSRSFLSYARHEYFRRLLCNLIGEWVENGEYPYDLETLGRIVQDICYYNAKEYFGF</sequence>
<proteinExistence type="inferred from homology"/>
<protein>
    <recommendedName>
        <fullName evidence="1">Uronate isomerase</fullName>
        <ecNumber evidence="1">5.3.1.12</ecNumber>
    </recommendedName>
    <alternativeName>
        <fullName evidence="1">Glucuronate isomerase</fullName>
    </alternativeName>
    <alternativeName>
        <fullName evidence="1">Uronic isomerase</fullName>
    </alternativeName>
</protein>
<keyword id="KW-0413">Isomerase</keyword>
<reference key="1">
    <citation type="submission" date="2009-01" db="EMBL/GenBank/DDBJ databases">
        <title>Complete sequence of chromosome of Caldicellulosiruptor becscii DSM 6725.</title>
        <authorList>
            <person name="Lucas S."/>
            <person name="Copeland A."/>
            <person name="Lapidus A."/>
            <person name="Glavina del Rio T."/>
            <person name="Tice H."/>
            <person name="Bruce D."/>
            <person name="Goodwin L."/>
            <person name="Pitluck S."/>
            <person name="Sims D."/>
            <person name="Meincke L."/>
            <person name="Brettin T."/>
            <person name="Detter J.C."/>
            <person name="Han C."/>
            <person name="Larimer F."/>
            <person name="Land M."/>
            <person name="Hauser L."/>
            <person name="Kyrpides N."/>
            <person name="Ovchinnikova G."/>
            <person name="Kataeva I."/>
            <person name="Adams M.W.W."/>
        </authorList>
    </citation>
    <scope>NUCLEOTIDE SEQUENCE [LARGE SCALE GENOMIC DNA]</scope>
    <source>
        <strain>ATCC BAA-1888 / DSM 6725 / KCTC 15123 / Z-1320</strain>
    </source>
</reference>
<feature type="chain" id="PRO_1000147685" description="Uronate isomerase">
    <location>
        <begin position="1"/>
        <end position="464"/>
    </location>
</feature>
<name>UXAC_CALBD</name>
<dbReference type="EC" id="5.3.1.12" evidence="1"/>
<dbReference type="EMBL" id="CP001393">
    <property type="protein sequence ID" value="ACM60500.1"/>
    <property type="molecule type" value="Genomic_DNA"/>
</dbReference>
<dbReference type="RefSeq" id="WP_015907868.1">
    <property type="nucleotide sequence ID" value="NC_012034.1"/>
</dbReference>
<dbReference type="SMR" id="B9MS46"/>
<dbReference type="STRING" id="521460.Athe_1402"/>
<dbReference type="GeneID" id="31772748"/>
<dbReference type="KEGG" id="ate:Athe_1402"/>
<dbReference type="eggNOG" id="COG1904">
    <property type="taxonomic scope" value="Bacteria"/>
</dbReference>
<dbReference type="HOGENOM" id="CLU_044465_1_0_9"/>
<dbReference type="UniPathway" id="UPA00246"/>
<dbReference type="Proteomes" id="UP000007723">
    <property type="component" value="Chromosome"/>
</dbReference>
<dbReference type="GO" id="GO:0008880">
    <property type="term" value="F:glucuronate isomerase activity"/>
    <property type="evidence" value="ECO:0007669"/>
    <property type="project" value="UniProtKB-UniRule"/>
</dbReference>
<dbReference type="GO" id="GO:0019698">
    <property type="term" value="P:D-galacturonate catabolic process"/>
    <property type="evidence" value="ECO:0007669"/>
    <property type="project" value="TreeGrafter"/>
</dbReference>
<dbReference type="GO" id="GO:0042840">
    <property type="term" value="P:D-glucuronate catabolic process"/>
    <property type="evidence" value="ECO:0007669"/>
    <property type="project" value="TreeGrafter"/>
</dbReference>
<dbReference type="Gene3D" id="3.20.20.140">
    <property type="entry name" value="Metal-dependent hydrolases"/>
    <property type="match status" value="1"/>
</dbReference>
<dbReference type="Gene3D" id="1.10.2020.10">
    <property type="entry name" value="uronate isomerase, domain 2, chain A"/>
    <property type="match status" value="1"/>
</dbReference>
<dbReference type="HAMAP" id="MF_00675">
    <property type="entry name" value="UxaC"/>
    <property type="match status" value="1"/>
</dbReference>
<dbReference type="InterPro" id="IPR032466">
    <property type="entry name" value="Metal_Hydrolase"/>
</dbReference>
<dbReference type="InterPro" id="IPR003766">
    <property type="entry name" value="Uronate_isomerase"/>
</dbReference>
<dbReference type="NCBIfam" id="NF002794">
    <property type="entry name" value="PRK02925.1"/>
    <property type="match status" value="1"/>
</dbReference>
<dbReference type="PANTHER" id="PTHR30068">
    <property type="entry name" value="URONATE ISOMERASE"/>
    <property type="match status" value="1"/>
</dbReference>
<dbReference type="PANTHER" id="PTHR30068:SF4">
    <property type="entry name" value="URONATE ISOMERASE"/>
    <property type="match status" value="1"/>
</dbReference>
<dbReference type="Pfam" id="PF02614">
    <property type="entry name" value="UxaC"/>
    <property type="match status" value="1"/>
</dbReference>
<dbReference type="SUPFAM" id="SSF51556">
    <property type="entry name" value="Metallo-dependent hydrolases"/>
    <property type="match status" value="1"/>
</dbReference>
<organism>
    <name type="scientific">Caldicellulosiruptor bescii (strain ATCC BAA-1888 / DSM 6725 / KCTC 15123 / Z-1320)</name>
    <name type="common">Anaerocellum thermophilum</name>
    <dbReference type="NCBI Taxonomy" id="521460"/>
    <lineage>
        <taxon>Bacteria</taxon>
        <taxon>Bacillati</taxon>
        <taxon>Bacillota</taxon>
        <taxon>Bacillota incertae sedis</taxon>
        <taxon>Caldicellulosiruptorales</taxon>
        <taxon>Caldicellulosiruptoraceae</taxon>
        <taxon>Caldicellulosiruptor</taxon>
    </lineage>
</organism>
<comment type="catalytic activity">
    <reaction evidence="1">
        <text>D-glucuronate = D-fructuronate</text>
        <dbReference type="Rhea" id="RHEA:13049"/>
        <dbReference type="ChEBI" id="CHEBI:58720"/>
        <dbReference type="ChEBI" id="CHEBI:59863"/>
        <dbReference type="EC" id="5.3.1.12"/>
    </reaction>
</comment>
<comment type="catalytic activity">
    <reaction evidence="1">
        <text>aldehydo-D-galacturonate = keto-D-tagaturonate</text>
        <dbReference type="Rhea" id="RHEA:27702"/>
        <dbReference type="ChEBI" id="CHEBI:12952"/>
        <dbReference type="ChEBI" id="CHEBI:17886"/>
        <dbReference type="EC" id="5.3.1.12"/>
    </reaction>
</comment>
<comment type="pathway">
    <text evidence="1">Carbohydrate metabolism; pentose and glucuronate interconversion.</text>
</comment>
<comment type="similarity">
    <text evidence="1">Belongs to the metallo-dependent hydrolases superfamily. Uronate isomerase family.</text>
</comment>
<gene>
    <name evidence="1" type="primary">uxaC</name>
    <name type="ordered locus">Athe_1402</name>
</gene>